<sequence>MAGKARVHELAKELGVTSKELLATLKEQGEFVKSASSTVEAPVARRLRESFASKSAPANGAKPGPAASARPGAKPTPGGPRPGPRTPAPAASAPQAPAEQTARPTDARPGPAVKPGPAPTPARPAAPEAPAAKAAPEAPAQRPTPGGPRPGQQQQRPGAPAQGGPRPGPKPGPKTPRVGNNPYSSQPAPERERPAARPGPGGPRPGPAQGGPRPGPGQGAPRPGATPGPRPAAAQGGPRPGGPRPSPGSMPPRPNPGAMPQRTPRPGPSAGGRPGRPGGAPGAGRPGGGGGGYRGGGGAPGAGAGAPAGGGFRGRPGGGGGRPGGPGGRGGAAGAFGRPGGAPRRGRKSKRQKRQEYDSMQAPSVGGVRLPRGNGEIIRLARGASLSDFAEKIDANPAALVQALFNLGEMVTATQSVNDETLELLGSEMNYVVQVVSPEDEDRELLESFDLTYGEDEGDEDDLQVRPPVVTVMGHVDHGKTRLLDTIRKANVREGEAGGITQHIGAYQVMTHLGDEDRLITFIDTPGHEAFTAMRARGAKATDIAILVVAADDGVMPQTVEAINHAQAADVPIVVAVNKIDKEGANPEKIRQQLTEYGLVAEEYGGDTMFVDISAKQGTNIDALLEAVLLTADAALDLRANPNMDAQGVAIEAHLDRGRGPVATVLIQRGTLRVGDSIVAGDAYGRVRRMVDEHGEDVEAALPSRPVQVVGFTSVPGAGDNLLVVDEDRIARQIADRRNARKRNALAARSRKRISLEDLDAALKETSELNLILKGDNAGTVEALEEALMGIEVGDEVRLRVIDRGVGGVTETNVNLASASNAIIIGFNVRAEGKATELANREGVDIRYYSVIYQAIDEIEKALKGMLKPIYEEVELGRAEIRAIFRSSKVGNIAGCMVLSGSVKRNAKARLLRDNVVVAETTTISSLRREKDDVTEVREGFECGMTLTYNDIKEGDIIEAYELREKPRD</sequence>
<name>IF2_NOCFA</name>
<keyword id="KW-0963">Cytoplasm</keyword>
<keyword id="KW-0342">GTP-binding</keyword>
<keyword id="KW-0396">Initiation factor</keyword>
<keyword id="KW-0547">Nucleotide-binding</keyword>
<keyword id="KW-0648">Protein biosynthesis</keyword>
<keyword id="KW-1185">Reference proteome</keyword>
<accession>Q5YSC6</accession>
<proteinExistence type="inferred from homology"/>
<protein>
    <recommendedName>
        <fullName evidence="2">Translation initiation factor IF-2</fullName>
    </recommendedName>
</protein>
<gene>
    <name evidence="2" type="primary">infB</name>
    <name type="ordered locus">NFA_40670</name>
</gene>
<comment type="function">
    <text evidence="2">One of the essential components for the initiation of protein synthesis. Protects formylmethionyl-tRNA from spontaneous hydrolysis and promotes its binding to the 30S ribosomal subunits. Also involved in the hydrolysis of GTP during the formation of the 70S ribosomal complex.</text>
</comment>
<comment type="subcellular location">
    <subcellularLocation>
        <location evidence="2">Cytoplasm</location>
    </subcellularLocation>
</comment>
<comment type="similarity">
    <text evidence="2">Belongs to the TRAFAC class translation factor GTPase superfamily. Classic translation factor GTPase family. IF-2 subfamily.</text>
</comment>
<comment type="sequence caution" evidence="4">
    <conflict type="erroneous initiation">
        <sequence resource="EMBL-CDS" id="BAD58915"/>
    </conflict>
</comment>
<reference key="1">
    <citation type="journal article" date="2004" name="Proc. Natl. Acad. Sci. U.S.A.">
        <title>The complete genomic sequence of Nocardia farcinica IFM 10152.</title>
        <authorList>
            <person name="Ishikawa J."/>
            <person name="Yamashita A."/>
            <person name="Mikami Y."/>
            <person name="Hoshino Y."/>
            <person name="Kurita H."/>
            <person name="Hotta K."/>
            <person name="Shiba T."/>
            <person name="Hattori M."/>
        </authorList>
    </citation>
    <scope>NUCLEOTIDE SEQUENCE [LARGE SCALE GENOMIC DNA]</scope>
    <source>
        <strain>IFM 10152</strain>
    </source>
</reference>
<dbReference type="EMBL" id="AP006618">
    <property type="protein sequence ID" value="BAD58915.1"/>
    <property type="status" value="ALT_INIT"/>
    <property type="molecule type" value="Genomic_DNA"/>
</dbReference>
<dbReference type="RefSeq" id="WP_041560304.1">
    <property type="nucleotide sequence ID" value="NC_006361.1"/>
</dbReference>
<dbReference type="SMR" id="Q5YSC6"/>
<dbReference type="STRING" id="247156.NFA_40670"/>
<dbReference type="GeneID" id="61134710"/>
<dbReference type="KEGG" id="nfa:NFA_40670"/>
<dbReference type="eggNOG" id="COG0481">
    <property type="taxonomic scope" value="Bacteria"/>
</dbReference>
<dbReference type="eggNOG" id="COG0532">
    <property type="taxonomic scope" value="Bacteria"/>
</dbReference>
<dbReference type="HOGENOM" id="CLU_006301_9_2_11"/>
<dbReference type="OrthoDB" id="9811804at2"/>
<dbReference type="Proteomes" id="UP000006820">
    <property type="component" value="Chromosome"/>
</dbReference>
<dbReference type="GO" id="GO:0005829">
    <property type="term" value="C:cytosol"/>
    <property type="evidence" value="ECO:0007669"/>
    <property type="project" value="TreeGrafter"/>
</dbReference>
<dbReference type="GO" id="GO:0005525">
    <property type="term" value="F:GTP binding"/>
    <property type="evidence" value="ECO:0007669"/>
    <property type="project" value="UniProtKB-KW"/>
</dbReference>
<dbReference type="GO" id="GO:0003924">
    <property type="term" value="F:GTPase activity"/>
    <property type="evidence" value="ECO:0007669"/>
    <property type="project" value="UniProtKB-UniRule"/>
</dbReference>
<dbReference type="GO" id="GO:0003743">
    <property type="term" value="F:translation initiation factor activity"/>
    <property type="evidence" value="ECO:0007669"/>
    <property type="project" value="UniProtKB-UniRule"/>
</dbReference>
<dbReference type="CDD" id="cd01887">
    <property type="entry name" value="IF2_eIF5B"/>
    <property type="match status" value="1"/>
</dbReference>
<dbReference type="CDD" id="cd03702">
    <property type="entry name" value="IF2_mtIF2_II"/>
    <property type="match status" value="1"/>
</dbReference>
<dbReference type="CDD" id="cd03692">
    <property type="entry name" value="mtIF2_IVc"/>
    <property type="match status" value="1"/>
</dbReference>
<dbReference type="FunFam" id="1.10.10.2480:FF:000003">
    <property type="entry name" value="Translation initiation factor IF-2"/>
    <property type="match status" value="1"/>
</dbReference>
<dbReference type="FunFam" id="2.40.30.10:FF:000007">
    <property type="entry name" value="Translation initiation factor IF-2"/>
    <property type="match status" value="1"/>
</dbReference>
<dbReference type="FunFam" id="2.40.30.10:FF:000008">
    <property type="entry name" value="Translation initiation factor IF-2"/>
    <property type="match status" value="1"/>
</dbReference>
<dbReference type="FunFam" id="3.40.50.10050:FF:000001">
    <property type="entry name" value="Translation initiation factor IF-2"/>
    <property type="match status" value="1"/>
</dbReference>
<dbReference type="FunFam" id="3.40.50.300:FF:000019">
    <property type="entry name" value="Translation initiation factor IF-2"/>
    <property type="match status" value="1"/>
</dbReference>
<dbReference type="Gene3D" id="1.10.10.2480">
    <property type="match status" value="1"/>
</dbReference>
<dbReference type="Gene3D" id="3.40.50.300">
    <property type="entry name" value="P-loop containing nucleotide triphosphate hydrolases"/>
    <property type="match status" value="1"/>
</dbReference>
<dbReference type="Gene3D" id="2.40.30.10">
    <property type="entry name" value="Translation factors"/>
    <property type="match status" value="2"/>
</dbReference>
<dbReference type="Gene3D" id="3.40.50.10050">
    <property type="entry name" value="Translation initiation factor IF- 2, domain 3"/>
    <property type="match status" value="1"/>
</dbReference>
<dbReference type="HAMAP" id="MF_00100_B">
    <property type="entry name" value="IF_2_B"/>
    <property type="match status" value="1"/>
</dbReference>
<dbReference type="InterPro" id="IPR053905">
    <property type="entry name" value="EF-G-like_DII"/>
</dbReference>
<dbReference type="InterPro" id="IPR004161">
    <property type="entry name" value="EFTu-like_2"/>
</dbReference>
<dbReference type="InterPro" id="IPR044145">
    <property type="entry name" value="IF2_II"/>
</dbReference>
<dbReference type="InterPro" id="IPR006847">
    <property type="entry name" value="IF2_N"/>
</dbReference>
<dbReference type="InterPro" id="IPR027417">
    <property type="entry name" value="P-loop_NTPase"/>
</dbReference>
<dbReference type="InterPro" id="IPR005225">
    <property type="entry name" value="Small_GTP-bd"/>
</dbReference>
<dbReference type="InterPro" id="IPR000795">
    <property type="entry name" value="T_Tr_GTP-bd_dom"/>
</dbReference>
<dbReference type="InterPro" id="IPR000178">
    <property type="entry name" value="TF_IF2_bacterial-like"/>
</dbReference>
<dbReference type="InterPro" id="IPR015760">
    <property type="entry name" value="TIF_IF2"/>
</dbReference>
<dbReference type="InterPro" id="IPR023115">
    <property type="entry name" value="TIF_IF2_dom3"/>
</dbReference>
<dbReference type="InterPro" id="IPR036925">
    <property type="entry name" value="TIF_IF2_dom3_sf"/>
</dbReference>
<dbReference type="InterPro" id="IPR009000">
    <property type="entry name" value="Transl_B-barrel_sf"/>
</dbReference>
<dbReference type="NCBIfam" id="TIGR00487">
    <property type="entry name" value="IF-2"/>
    <property type="match status" value="1"/>
</dbReference>
<dbReference type="NCBIfam" id="TIGR00231">
    <property type="entry name" value="small_GTP"/>
    <property type="match status" value="1"/>
</dbReference>
<dbReference type="PANTHER" id="PTHR43381:SF5">
    <property type="entry name" value="TR-TYPE G DOMAIN-CONTAINING PROTEIN"/>
    <property type="match status" value="1"/>
</dbReference>
<dbReference type="PANTHER" id="PTHR43381">
    <property type="entry name" value="TRANSLATION INITIATION FACTOR IF-2-RELATED"/>
    <property type="match status" value="1"/>
</dbReference>
<dbReference type="Pfam" id="PF22042">
    <property type="entry name" value="EF-G_D2"/>
    <property type="match status" value="1"/>
</dbReference>
<dbReference type="Pfam" id="PF00009">
    <property type="entry name" value="GTP_EFTU"/>
    <property type="match status" value="1"/>
</dbReference>
<dbReference type="Pfam" id="PF03144">
    <property type="entry name" value="GTP_EFTU_D2"/>
    <property type="match status" value="1"/>
</dbReference>
<dbReference type="Pfam" id="PF11987">
    <property type="entry name" value="IF-2"/>
    <property type="match status" value="1"/>
</dbReference>
<dbReference type="Pfam" id="PF04760">
    <property type="entry name" value="IF2_N"/>
    <property type="match status" value="2"/>
</dbReference>
<dbReference type="PRINTS" id="PR00315">
    <property type="entry name" value="ELONGATNFCT"/>
</dbReference>
<dbReference type="SUPFAM" id="SSF52156">
    <property type="entry name" value="Initiation factor IF2/eIF5b, domain 3"/>
    <property type="match status" value="1"/>
</dbReference>
<dbReference type="SUPFAM" id="SSF52540">
    <property type="entry name" value="P-loop containing nucleoside triphosphate hydrolases"/>
    <property type="match status" value="1"/>
</dbReference>
<dbReference type="SUPFAM" id="SSF50447">
    <property type="entry name" value="Translation proteins"/>
    <property type="match status" value="2"/>
</dbReference>
<dbReference type="PROSITE" id="PS51722">
    <property type="entry name" value="G_TR_2"/>
    <property type="match status" value="1"/>
</dbReference>
<evidence type="ECO:0000250" key="1"/>
<evidence type="ECO:0000255" key="2">
    <source>
        <dbReference type="HAMAP-Rule" id="MF_00100"/>
    </source>
</evidence>
<evidence type="ECO:0000256" key="3">
    <source>
        <dbReference type="SAM" id="MobiDB-lite"/>
    </source>
</evidence>
<evidence type="ECO:0000305" key="4"/>
<organism>
    <name type="scientific">Nocardia farcinica (strain IFM 10152)</name>
    <dbReference type="NCBI Taxonomy" id="247156"/>
    <lineage>
        <taxon>Bacteria</taxon>
        <taxon>Bacillati</taxon>
        <taxon>Actinomycetota</taxon>
        <taxon>Actinomycetes</taxon>
        <taxon>Mycobacteriales</taxon>
        <taxon>Nocardiaceae</taxon>
        <taxon>Nocardia</taxon>
    </lineage>
</organism>
<feature type="chain" id="PRO_0000228219" description="Translation initiation factor IF-2">
    <location>
        <begin position="1"/>
        <end position="969"/>
    </location>
</feature>
<feature type="domain" description="tr-type G">
    <location>
        <begin position="465"/>
        <end position="636"/>
    </location>
</feature>
<feature type="region of interest" description="Disordered" evidence="3">
    <location>
        <begin position="50"/>
        <end position="370"/>
    </location>
</feature>
<feature type="region of interest" description="G1" evidence="1">
    <location>
        <begin position="474"/>
        <end position="481"/>
    </location>
</feature>
<feature type="region of interest" description="G2" evidence="1">
    <location>
        <begin position="499"/>
        <end position="503"/>
    </location>
</feature>
<feature type="region of interest" description="G3" evidence="1">
    <location>
        <begin position="524"/>
        <end position="527"/>
    </location>
</feature>
<feature type="region of interest" description="G4" evidence="1">
    <location>
        <begin position="578"/>
        <end position="581"/>
    </location>
</feature>
<feature type="region of interest" description="G5" evidence="1">
    <location>
        <begin position="614"/>
        <end position="616"/>
    </location>
</feature>
<feature type="compositionally biased region" description="Low complexity" evidence="3">
    <location>
        <begin position="54"/>
        <end position="76"/>
    </location>
</feature>
<feature type="compositionally biased region" description="Pro residues" evidence="3">
    <location>
        <begin position="77"/>
        <end position="87"/>
    </location>
</feature>
<feature type="compositionally biased region" description="Low complexity" evidence="3">
    <location>
        <begin position="88"/>
        <end position="102"/>
    </location>
</feature>
<feature type="compositionally biased region" description="Pro residues" evidence="3">
    <location>
        <begin position="112"/>
        <end position="124"/>
    </location>
</feature>
<feature type="compositionally biased region" description="Low complexity" evidence="3">
    <location>
        <begin position="125"/>
        <end position="164"/>
    </location>
</feature>
<feature type="compositionally biased region" description="Pro residues" evidence="3">
    <location>
        <begin position="240"/>
        <end position="267"/>
    </location>
</feature>
<feature type="compositionally biased region" description="Gly residues" evidence="3">
    <location>
        <begin position="269"/>
        <end position="340"/>
    </location>
</feature>
<feature type="compositionally biased region" description="Basic residues" evidence="3">
    <location>
        <begin position="344"/>
        <end position="353"/>
    </location>
</feature>
<feature type="binding site" evidence="2">
    <location>
        <begin position="474"/>
        <end position="481"/>
    </location>
    <ligand>
        <name>GTP</name>
        <dbReference type="ChEBI" id="CHEBI:37565"/>
    </ligand>
</feature>
<feature type="binding site" evidence="2">
    <location>
        <begin position="524"/>
        <end position="528"/>
    </location>
    <ligand>
        <name>GTP</name>
        <dbReference type="ChEBI" id="CHEBI:37565"/>
    </ligand>
</feature>
<feature type="binding site" evidence="2">
    <location>
        <begin position="578"/>
        <end position="581"/>
    </location>
    <ligand>
        <name>GTP</name>
        <dbReference type="ChEBI" id="CHEBI:37565"/>
    </ligand>
</feature>